<comment type="function">
    <text>May be involved in transcriptional regulation.</text>
</comment>
<comment type="subcellular location">
    <subcellularLocation>
        <location evidence="4">Nucleus</location>
    </subcellularLocation>
</comment>
<comment type="alternative products">
    <event type="alternative splicing"/>
    <isoform>
        <id>P16415-1</id>
        <name>1</name>
        <sequence type="displayed"/>
    </isoform>
    <isoform>
        <id>P16415-2</id>
        <name>2</name>
        <sequence type="described" ref="VSP_055972"/>
    </isoform>
</comment>
<comment type="similarity">
    <text evidence="4">Belongs to the krueppel C2H2-type zinc-finger protein family.</text>
</comment>
<comment type="sequence caution" evidence="4">
    <conflict type="erroneous initiation">
        <sequence resource="EMBL-CDS" id="CAA36064"/>
    </conflict>
</comment>
<evidence type="ECO:0000255" key="1">
    <source>
        <dbReference type="PROSITE-ProRule" id="PRU00042"/>
    </source>
</evidence>
<evidence type="ECO:0000255" key="2">
    <source>
        <dbReference type="PROSITE-ProRule" id="PRU00119"/>
    </source>
</evidence>
<evidence type="ECO:0000303" key="3">
    <source>
    </source>
</evidence>
<evidence type="ECO:0000305" key="4"/>
<sequence>MDSVAFEDVAVNFTQEEWALLGPSQKSLYRNVMQETIRNLDCIEMKWEDQNIGDQCQNAKRNLRSHTCEIKDDSQCGETFGQIPDSIVNKNTPRVNPCDSGECGEVVLGHSSLNCNIRVDTGHKSCEHQEYGEKPYTHKQRGKAISHQHSFQTHERPPTGKKPFDCKECAKTFSSLGNLRRHMAAHHGDGPYKCKLCGKAFVWPSLFHLHERTHTGEKPYECKQCSKAFPFYSSYLRHERIHTGEKAYECKQCSKAFPDYSTYLRHERTHTGEKPYKCTQCGKAFSCYYYTRLHERTHTGEQPYACKQCGKTFYHHTSFRRHMIRHTGDGPHKCKICGKGFDCPSSVRNHETTHTGEKPYECKQCGKVLSHSSSFRSHMITHTGDGPQKCKICGKAFGCPSLFQRHERTHTGEKPYQCKQCGKAFSLAGSLRRHEATHTGVKPYKCQCGKAFSDLSSFQNHETTHTGEKPYECKECGKAFSCFKYLSQHKRTHTVEKPYECKTCRKAFSHFSNLKVHERIHSGEKPYECKECGKAFSWLTCLLRHERIHTGEKPYECLQCGKAFTRSRFLRGHEKTHTGEKLYECKECGKALSSLRSLHRHKRTHWKDTL</sequence>
<protein>
    <recommendedName>
        <fullName>Zinc finger protein 823</fullName>
    </recommendedName>
    <alternativeName>
        <fullName>Zinc finger protein ZFP-36</fullName>
    </alternativeName>
</protein>
<organism>
    <name type="scientific">Homo sapiens</name>
    <name type="common">Human</name>
    <dbReference type="NCBI Taxonomy" id="9606"/>
    <lineage>
        <taxon>Eukaryota</taxon>
        <taxon>Metazoa</taxon>
        <taxon>Chordata</taxon>
        <taxon>Craniata</taxon>
        <taxon>Vertebrata</taxon>
        <taxon>Euteleostomi</taxon>
        <taxon>Mammalia</taxon>
        <taxon>Eutheria</taxon>
        <taxon>Euarchontoglires</taxon>
        <taxon>Primates</taxon>
        <taxon>Haplorrhini</taxon>
        <taxon>Catarrhini</taxon>
        <taxon>Hominidae</taxon>
        <taxon>Homo</taxon>
    </lineage>
</organism>
<reference key="1">
    <citation type="journal article" date="2004" name="Nat. Genet.">
        <title>Complete sequencing and characterization of 21,243 full-length human cDNAs.</title>
        <authorList>
            <person name="Ota T."/>
            <person name="Suzuki Y."/>
            <person name="Nishikawa T."/>
            <person name="Otsuki T."/>
            <person name="Sugiyama T."/>
            <person name="Irie R."/>
            <person name="Wakamatsu A."/>
            <person name="Hayashi K."/>
            <person name="Sato H."/>
            <person name="Nagai K."/>
            <person name="Kimura K."/>
            <person name="Makita H."/>
            <person name="Sekine M."/>
            <person name="Obayashi M."/>
            <person name="Nishi T."/>
            <person name="Shibahara T."/>
            <person name="Tanaka T."/>
            <person name="Ishii S."/>
            <person name="Yamamoto J."/>
            <person name="Saito K."/>
            <person name="Kawai Y."/>
            <person name="Isono Y."/>
            <person name="Nakamura Y."/>
            <person name="Nagahari K."/>
            <person name="Murakami K."/>
            <person name="Yasuda T."/>
            <person name="Iwayanagi T."/>
            <person name="Wagatsuma M."/>
            <person name="Shiratori A."/>
            <person name="Sudo H."/>
            <person name="Hosoiri T."/>
            <person name="Kaku Y."/>
            <person name="Kodaira H."/>
            <person name="Kondo H."/>
            <person name="Sugawara M."/>
            <person name="Takahashi M."/>
            <person name="Kanda K."/>
            <person name="Yokoi T."/>
            <person name="Furuya T."/>
            <person name="Kikkawa E."/>
            <person name="Omura Y."/>
            <person name="Abe K."/>
            <person name="Kamihara K."/>
            <person name="Katsuta N."/>
            <person name="Sato K."/>
            <person name="Tanikawa M."/>
            <person name="Yamazaki M."/>
            <person name="Ninomiya K."/>
            <person name="Ishibashi T."/>
            <person name="Yamashita H."/>
            <person name="Murakawa K."/>
            <person name="Fujimori K."/>
            <person name="Tanai H."/>
            <person name="Kimata M."/>
            <person name="Watanabe M."/>
            <person name="Hiraoka S."/>
            <person name="Chiba Y."/>
            <person name="Ishida S."/>
            <person name="Ono Y."/>
            <person name="Takiguchi S."/>
            <person name="Watanabe S."/>
            <person name="Yosida M."/>
            <person name="Hotuta T."/>
            <person name="Kusano J."/>
            <person name="Kanehori K."/>
            <person name="Takahashi-Fujii A."/>
            <person name="Hara H."/>
            <person name="Tanase T.-O."/>
            <person name="Nomura Y."/>
            <person name="Togiya S."/>
            <person name="Komai F."/>
            <person name="Hara R."/>
            <person name="Takeuchi K."/>
            <person name="Arita M."/>
            <person name="Imose N."/>
            <person name="Musashino K."/>
            <person name="Yuuki H."/>
            <person name="Oshima A."/>
            <person name="Sasaki N."/>
            <person name="Aotsuka S."/>
            <person name="Yoshikawa Y."/>
            <person name="Matsunawa H."/>
            <person name="Ichihara T."/>
            <person name="Shiohata N."/>
            <person name="Sano S."/>
            <person name="Moriya S."/>
            <person name="Momiyama H."/>
            <person name="Satoh N."/>
            <person name="Takami S."/>
            <person name="Terashima Y."/>
            <person name="Suzuki O."/>
            <person name="Nakagawa S."/>
            <person name="Senoh A."/>
            <person name="Mizoguchi H."/>
            <person name="Goto Y."/>
            <person name="Shimizu F."/>
            <person name="Wakebe H."/>
            <person name="Hishigaki H."/>
            <person name="Watanabe T."/>
            <person name="Sugiyama A."/>
            <person name="Takemoto M."/>
            <person name="Kawakami B."/>
            <person name="Yamazaki M."/>
            <person name="Watanabe K."/>
            <person name="Kumagai A."/>
            <person name="Itakura S."/>
            <person name="Fukuzumi Y."/>
            <person name="Fujimori Y."/>
            <person name="Komiyama M."/>
            <person name="Tashiro H."/>
            <person name="Tanigami A."/>
            <person name="Fujiwara T."/>
            <person name="Ono T."/>
            <person name="Yamada K."/>
            <person name="Fujii Y."/>
            <person name="Ozaki K."/>
            <person name="Hirao M."/>
            <person name="Ohmori Y."/>
            <person name="Kawabata A."/>
            <person name="Hikiji T."/>
            <person name="Kobatake N."/>
            <person name="Inagaki H."/>
            <person name="Ikema Y."/>
            <person name="Okamoto S."/>
            <person name="Okitani R."/>
            <person name="Kawakami T."/>
            <person name="Noguchi S."/>
            <person name="Itoh T."/>
            <person name="Shigeta K."/>
            <person name="Senba T."/>
            <person name="Matsumura K."/>
            <person name="Nakajima Y."/>
            <person name="Mizuno T."/>
            <person name="Morinaga M."/>
            <person name="Sasaki M."/>
            <person name="Togashi T."/>
            <person name="Oyama M."/>
            <person name="Hata H."/>
            <person name="Watanabe M."/>
            <person name="Komatsu T."/>
            <person name="Mizushima-Sugano J."/>
            <person name="Satoh T."/>
            <person name="Shirai Y."/>
            <person name="Takahashi Y."/>
            <person name="Nakagawa K."/>
            <person name="Okumura K."/>
            <person name="Nagase T."/>
            <person name="Nomura N."/>
            <person name="Kikuchi H."/>
            <person name="Masuho Y."/>
            <person name="Yamashita R."/>
            <person name="Nakai K."/>
            <person name="Yada T."/>
            <person name="Nakamura Y."/>
            <person name="Ohara O."/>
            <person name="Isogai T."/>
            <person name="Sugano S."/>
        </authorList>
    </citation>
    <scope>NUCLEOTIDE SEQUENCE [LARGE SCALE MRNA] (ISOFORM 2)</scope>
    <source>
        <tissue>Thymus</tissue>
    </source>
</reference>
<reference key="2">
    <citation type="journal article" date="2004" name="Nature">
        <title>The DNA sequence and biology of human chromosome 19.</title>
        <authorList>
            <person name="Grimwood J."/>
            <person name="Gordon L.A."/>
            <person name="Olsen A.S."/>
            <person name="Terry A."/>
            <person name="Schmutz J."/>
            <person name="Lamerdin J.E."/>
            <person name="Hellsten U."/>
            <person name="Goodstein D."/>
            <person name="Couronne O."/>
            <person name="Tran-Gyamfi M."/>
            <person name="Aerts A."/>
            <person name="Altherr M."/>
            <person name="Ashworth L."/>
            <person name="Bajorek E."/>
            <person name="Black S."/>
            <person name="Branscomb E."/>
            <person name="Caenepeel S."/>
            <person name="Carrano A.V."/>
            <person name="Caoile C."/>
            <person name="Chan Y.M."/>
            <person name="Christensen M."/>
            <person name="Cleland C.A."/>
            <person name="Copeland A."/>
            <person name="Dalin E."/>
            <person name="Dehal P."/>
            <person name="Denys M."/>
            <person name="Detter J.C."/>
            <person name="Escobar J."/>
            <person name="Flowers D."/>
            <person name="Fotopulos D."/>
            <person name="Garcia C."/>
            <person name="Georgescu A.M."/>
            <person name="Glavina T."/>
            <person name="Gomez M."/>
            <person name="Gonzales E."/>
            <person name="Groza M."/>
            <person name="Hammon N."/>
            <person name="Hawkins T."/>
            <person name="Haydu L."/>
            <person name="Ho I."/>
            <person name="Huang W."/>
            <person name="Israni S."/>
            <person name="Jett J."/>
            <person name="Kadner K."/>
            <person name="Kimball H."/>
            <person name="Kobayashi A."/>
            <person name="Larionov V."/>
            <person name="Leem S.-H."/>
            <person name="Lopez F."/>
            <person name="Lou Y."/>
            <person name="Lowry S."/>
            <person name="Malfatti S."/>
            <person name="Martinez D."/>
            <person name="McCready P.M."/>
            <person name="Medina C."/>
            <person name="Morgan J."/>
            <person name="Nelson K."/>
            <person name="Nolan M."/>
            <person name="Ovcharenko I."/>
            <person name="Pitluck S."/>
            <person name="Pollard M."/>
            <person name="Popkie A.P."/>
            <person name="Predki P."/>
            <person name="Quan G."/>
            <person name="Ramirez L."/>
            <person name="Rash S."/>
            <person name="Retterer J."/>
            <person name="Rodriguez A."/>
            <person name="Rogers S."/>
            <person name="Salamov A."/>
            <person name="Salazar A."/>
            <person name="She X."/>
            <person name="Smith D."/>
            <person name="Slezak T."/>
            <person name="Solovyev V."/>
            <person name="Thayer N."/>
            <person name="Tice H."/>
            <person name="Tsai M."/>
            <person name="Ustaszewska A."/>
            <person name="Vo N."/>
            <person name="Wagner M."/>
            <person name="Wheeler J."/>
            <person name="Wu K."/>
            <person name="Xie G."/>
            <person name="Yang J."/>
            <person name="Dubchak I."/>
            <person name="Furey T.S."/>
            <person name="DeJong P."/>
            <person name="Dickson M."/>
            <person name="Gordon D."/>
            <person name="Eichler E.E."/>
            <person name="Pennacchio L.A."/>
            <person name="Richardson P."/>
            <person name="Stubbs L."/>
            <person name="Rokhsar D.S."/>
            <person name="Myers R.M."/>
            <person name="Rubin E.M."/>
            <person name="Lucas S.M."/>
        </authorList>
    </citation>
    <scope>NUCLEOTIDE SEQUENCE [LARGE SCALE GENOMIC DNA]</scope>
</reference>
<reference key="3">
    <citation type="journal article" date="2004" name="Genome Res.">
        <title>The status, quality, and expansion of the NIH full-length cDNA project: the Mammalian Gene Collection (MGC).</title>
        <authorList>
            <consortium name="The MGC Project Team"/>
        </authorList>
    </citation>
    <scope>NUCLEOTIDE SEQUENCE [LARGE SCALE MRNA] (ISOFORM 1)</scope>
    <source>
        <tissue>Placenta</tissue>
        <tissue>Uterus</tissue>
    </source>
</reference>
<reference key="4">
    <citation type="submission" date="1990-02" db="EMBL/GenBank/DDBJ databases">
        <authorList>
            <person name="Cunliffe V."/>
            <person name="Trowsdale J."/>
        </authorList>
    </citation>
    <scope>NUCLEOTIDE SEQUENCE [MRNA] OF 1-548 (ISOFORM 1)</scope>
</reference>
<keyword id="KW-0025">Alternative splicing</keyword>
<keyword id="KW-0238">DNA-binding</keyword>
<keyword id="KW-0479">Metal-binding</keyword>
<keyword id="KW-0539">Nucleus</keyword>
<keyword id="KW-1267">Proteomics identification</keyword>
<keyword id="KW-1185">Reference proteome</keyword>
<keyword id="KW-0677">Repeat</keyword>
<keyword id="KW-0804">Transcription</keyword>
<keyword id="KW-0805">Transcription regulation</keyword>
<keyword id="KW-0862">Zinc</keyword>
<keyword id="KW-0863">Zinc-finger</keyword>
<name>ZN823_HUMAN</name>
<dbReference type="EMBL" id="AK303213">
    <property type="protein sequence ID" value="BAH13920.1"/>
    <property type="molecule type" value="mRNA"/>
</dbReference>
<dbReference type="EMBL" id="AC008543">
    <property type="status" value="NOT_ANNOTATED_CDS"/>
    <property type="molecule type" value="Genomic_DNA"/>
</dbReference>
<dbReference type="EMBL" id="BC052597">
    <property type="protein sequence ID" value="AAH52597.1"/>
    <property type="molecule type" value="mRNA"/>
</dbReference>
<dbReference type="EMBL" id="BC063560">
    <property type="protein sequence ID" value="AAH63560.1"/>
    <property type="molecule type" value="mRNA"/>
</dbReference>
<dbReference type="EMBL" id="X51760">
    <property type="protein sequence ID" value="CAA36064.1"/>
    <property type="status" value="ALT_INIT"/>
    <property type="molecule type" value="mRNA"/>
</dbReference>
<dbReference type="CCDS" id="CCDS45981.1">
    <molecule id="P16415-1"/>
</dbReference>
<dbReference type="PIR" id="S08686">
    <property type="entry name" value="S08686"/>
</dbReference>
<dbReference type="RefSeq" id="NP_001073962.1">
    <molecule id="P16415-1"/>
    <property type="nucleotide sequence ID" value="NM_001080493.4"/>
</dbReference>
<dbReference type="RefSeq" id="NP_001284539.1">
    <molecule id="P16415-2"/>
    <property type="nucleotide sequence ID" value="NM_001297610.2"/>
</dbReference>
<dbReference type="RefSeq" id="NP_059977.1">
    <property type="nucleotide sequence ID" value="NM_017507.1"/>
</dbReference>
<dbReference type="RefSeq" id="XP_016882430.1">
    <molecule id="P16415-2"/>
    <property type="nucleotide sequence ID" value="XM_017026941.2"/>
</dbReference>
<dbReference type="RefSeq" id="XP_016882431.1">
    <molecule id="P16415-2"/>
    <property type="nucleotide sequence ID" value="XM_017026942.2"/>
</dbReference>
<dbReference type="RefSeq" id="XP_054177372.1">
    <molecule id="P16415-2"/>
    <property type="nucleotide sequence ID" value="XM_054321397.1"/>
</dbReference>
<dbReference type="RefSeq" id="XP_054177373.1">
    <molecule id="P16415-2"/>
    <property type="nucleotide sequence ID" value="XM_054321398.1"/>
</dbReference>
<dbReference type="SMR" id="P16415"/>
<dbReference type="BioGRID" id="120713">
    <property type="interactions" value="6"/>
</dbReference>
<dbReference type="FunCoup" id="P16415">
    <property type="interactions" value="573"/>
</dbReference>
<dbReference type="IntAct" id="P16415">
    <property type="interactions" value="5"/>
</dbReference>
<dbReference type="STRING" id="9606.ENSP00000340683"/>
<dbReference type="GlyGen" id="P16415">
    <property type="glycosylation" value="1 site, 1 O-linked glycan (1 site)"/>
</dbReference>
<dbReference type="iPTMnet" id="P16415"/>
<dbReference type="PhosphoSitePlus" id="P16415"/>
<dbReference type="BioMuta" id="ZNF823"/>
<dbReference type="DMDM" id="148887464"/>
<dbReference type="jPOST" id="P16415"/>
<dbReference type="MassIVE" id="P16415"/>
<dbReference type="PaxDb" id="9606-ENSP00000340683"/>
<dbReference type="PeptideAtlas" id="P16415"/>
<dbReference type="ProteomicsDB" id="53358">
    <molecule id="P16415-1"/>
</dbReference>
<dbReference type="ProteomicsDB" id="6940"/>
<dbReference type="Antibodypedia" id="6939">
    <property type="antibodies" value="57 antibodies from 16 providers"/>
</dbReference>
<dbReference type="DNASU" id="55552"/>
<dbReference type="Ensembl" id="ENST00000341191.11">
    <molecule id="P16415-1"/>
    <property type="protein sequence ID" value="ENSP00000340683.5"/>
    <property type="gene ID" value="ENSG00000197933.13"/>
</dbReference>
<dbReference type="GeneID" id="55552"/>
<dbReference type="KEGG" id="hsa:55552"/>
<dbReference type="MANE-Select" id="ENST00000341191.11">
    <property type="protein sequence ID" value="ENSP00000340683.5"/>
    <property type="RefSeq nucleotide sequence ID" value="NM_001080493.4"/>
    <property type="RefSeq protein sequence ID" value="NP_001073962.1"/>
</dbReference>
<dbReference type="UCSC" id="uc002msm.3">
    <molecule id="P16415-1"/>
    <property type="organism name" value="human"/>
</dbReference>
<dbReference type="AGR" id="HGNC:30936"/>
<dbReference type="CTD" id="55552"/>
<dbReference type="DisGeNET" id="55552"/>
<dbReference type="GeneCards" id="ZNF823"/>
<dbReference type="HGNC" id="HGNC:30936">
    <property type="gene designation" value="ZNF823"/>
</dbReference>
<dbReference type="HPA" id="ENSG00000197933">
    <property type="expression patterns" value="Low tissue specificity"/>
</dbReference>
<dbReference type="neXtProt" id="NX_P16415"/>
<dbReference type="OpenTargets" id="ENSG00000197933"/>
<dbReference type="PharmGKB" id="PA162410690"/>
<dbReference type="VEuPathDB" id="HostDB:ENSG00000197933"/>
<dbReference type="eggNOG" id="KOG1721">
    <property type="taxonomic scope" value="Eukaryota"/>
</dbReference>
<dbReference type="GeneTree" id="ENSGT00950000182755"/>
<dbReference type="HOGENOM" id="CLU_002678_17_1_1"/>
<dbReference type="InParanoid" id="P16415"/>
<dbReference type="OMA" id="IDDSQCG"/>
<dbReference type="OrthoDB" id="6077919at2759"/>
<dbReference type="PAN-GO" id="P16415">
    <property type="GO annotations" value="4 GO annotations based on evolutionary models"/>
</dbReference>
<dbReference type="PhylomeDB" id="P16415"/>
<dbReference type="TreeFam" id="TF338854"/>
<dbReference type="PathwayCommons" id="P16415"/>
<dbReference type="SignaLink" id="P16415"/>
<dbReference type="BioGRID-ORCS" id="55552">
    <property type="hits" value="24 hits in 1174 CRISPR screens"/>
</dbReference>
<dbReference type="ChiTaRS" id="ZNF823">
    <property type="organism name" value="human"/>
</dbReference>
<dbReference type="GenomeRNAi" id="55552"/>
<dbReference type="Pharos" id="P16415">
    <property type="development level" value="Tdark"/>
</dbReference>
<dbReference type="PRO" id="PR:P16415"/>
<dbReference type="Proteomes" id="UP000005640">
    <property type="component" value="Chromosome 19"/>
</dbReference>
<dbReference type="RNAct" id="P16415">
    <property type="molecule type" value="protein"/>
</dbReference>
<dbReference type="Bgee" id="ENSG00000197933">
    <property type="expression patterns" value="Expressed in pancreatic ductal cell and 163 other cell types or tissues"/>
</dbReference>
<dbReference type="ExpressionAtlas" id="P16415">
    <property type="expression patterns" value="baseline and differential"/>
</dbReference>
<dbReference type="GO" id="GO:0005634">
    <property type="term" value="C:nucleus"/>
    <property type="evidence" value="ECO:0000318"/>
    <property type="project" value="GO_Central"/>
</dbReference>
<dbReference type="GO" id="GO:0000981">
    <property type="term" value="F:DNA-binding transcription factor activity, RNA polymerase II-specific"/>
    <property type="evidence" value="ECO:0000318"/>
    <property type="project" value="GO_Central"/>
</dbReference>
<dbReference type="GO" id="GO:0000977">
    <property type="term" value="F:RNA polymerase II transcription regulatory region sequence-specific DNA binding"/>
    <property type="evidence" value="ECO:0000318"/>
    <property type="project" value="GO_Central"/>
</dbReference>
<dbReference type="GO" id="GO:0008270">
    <property type="term" value="F:zinc ion binding"/>
    <property type="evidence" value="ECO:0007669"/>
    <property type="project" value="UniProtKB-KW"/>
</dbReference>
<dbReference type="GO" id="GO:0006357">
    <property type="term" value="P:regulation of transcription by RNA polymerase II"/>
    <property type="evidence" value="ECO:0000318"/>
    <property type="project" value="GO_Central"/>
</dbReference>
<dbReference type="CDD" id="cd07765">
    <property type="entry name" value="KRAB_A-box"/>
    <property type="match status" value="1"/>
</dbReference>
<dbReference type="FunFam" id="3.30.160.60:FF:003733">
    <property type="match status" value="1"/>
</dbReference>
<dbReference type="FunFam" id="3.30.160.60:FF:000193">
    <property type="entry name" value="Zinc finger protein 300"/>
    <property type="match status" value="2"/>
</dbReference>
<dbReference type="FunFam" id="3.30.160.60:FF:000184">
    <property type="entry name" value="Zinc finger protein 333"/>
    <property type="match status" value="2"/>
</dbReference>
<dbReference type="FunFam" id="3.30.160.60:FF:001433">
    <property type="entry name" value="Zinc finger protein 44"/>
    <property type="match status" value="1"/>
</dbReference>
<dbReference type="FunFam" id="3.30.160.60:FF:002254">
    <property type="entry name" value="Zinc finger protein 540"/>
    <property type="match status" value="1"/>
</dbReference>
<dbReference type="FunFam" id="3.30.160.60:FF:001432">
    <property type="entry name" value="Zinc finger protein 571"/>
    <property type="match status" value="1"/>
</dbReference>
<dbReference type="FunFam" id="3.30.160.60:FF:000350">
    <property type="entry name" value="Zinc finger protein 699"/>
    <property type="match status" value="1"/>
</dbReference>
<dbReference type="FunFam" id="3.30.160.60:FF:000564">
    <property type="entry name" value="zinc finger protein 699"/>
    <property type="match status" value="3"/>
</dbReference>
<dbReference type="FunFam" id="3.30.160.60:FF:000710">
    <property type="entry name" value="Zinc finger protein 768"/>
    <property type="match status" value="1"/>
</dbReference>
<dbReference type="FunFam" id="3.30.160.60:FF:000493">
    <property type="entry name" value="Zinc finger protein 805"/>
    <property type="match status" value="2"/>
</dbReference>
<dbReference type="FunFam" id="3.30.160.60:FF:001459">
    <property type="entry name" value="Zinc finger protein 823"/>
    <property type="match status" value="1"/>
</dbReference>
<dbReference type="Gene3D" id="6.10.140.140">
    <property type="match status" value="1"/>
</dbReference>
<dbReference type="Gene3D" id="3.30.160.60">
    <property type="entry name" value="Classic Zinc Finger"/>
    <property type="match status" value="16"/>
</dbReference>
<dbReference type="InterPro" id="IPR001909">
    <property type="entry name" value="KRAB"/>
</dbReference>
<dbReference type="InterPro" id="IPR036051">
    <property type="entry name" value="KRAB_dom_sf"/>
</dbReference>
<dbReference type="InterPro" id="IPR036236">
    <property type="entry name" value="Znf_C2H2_sf"/>
</dbReference>
<dbReference type="InterPro" id="IPR013087">
    <property type="entry name" value="Znf_C2H2_type"/>
</dbReference>
<dbReference type="PANTHER" id="PTHR24390">
    <property type="entry name" value="ZINC FINGER PROTEIN"/>
    <property type="match status" value="1"/>
</dbReference>
<dbReference type="PANTHER" id="PTHR24390:SF238">
    <property type="entry name" value="ZINC FINGER PROTEIN 763"/>
    <property type="match status" value="1"/>
</dbReference>
<dbReference type="Pfam" id="PF01352">
    <property type="entry name" value="KRAB"/>
    <property type="match status" value="1"/>
</dbReference>
<dbReference type="Pfam" id="PF00096">
    <property type="entry name" value="zf-C2H2"/>
    <property type="match status" value="10"/>
</dbReference>
<dbReference type="Pfam" id="PF13912">
    <property type="entry name" value="zf-C2H2_6"/>
    <property type="match status" value="3"/>
</dbReference>
<dbReference type="SMART" id="SM00349">
    <property type="entry name" value="KRAB"/>
    <property type="match status" value="1"/>
</dbReference>
<dbReference type="SMART" id="SM00355">
    <property type="entry name" value="ZnF_C2H2"/>
    <property type="match status" value="16"/>
</dbReference>
<dbReference type="SUPFAM" id="SSF57667">
    <property type="entry name" value="beta-beta-alpha zinc fingers"/>
    <property type="match status" value="9"/>
</dbReference>
<dbReference type="SUPFAM" id="SSF109640">
    <property type="entry name" value="KRAB domain (Kruppel-associated box)"/>
    <property type="match status" value="1"/>
</dbReference>
<dbReference type="PROSITE" id="PS50805">
    <property type="entry name" value="KRAB"/>
    <property type="match status" value="1"/>
</dbReference>
<dbReference type="PROSITE" id="PS00028">
    <property type="entry name" value="ZINC_FINGER_C2H2_1"/>
    <property type="match status" value="15"/>
</dbReference>
<dbReference type="PROSITE" id="PS50157">
    <property type="entry name" value="ZINC_FINGER_C2H2_2"/>
    <property type="match status" value="16"/>
</dbReference>
<proteinExistence type="evidence at protein level"/>
<gene>
    <name type="primary">ZNF823</name>
    <name type="synonym">ZFP36</name>
</gene>
<feature type="chain" id="PRO_0000047778" description="Zinc finger protein 823">
    <location>
        <begin position="1"/>
        <end position="610"/>
    </location>
</feature>
<feature type="domain" description="KRAB" evidence="2">
    <location>
        <begin position="4"/>
        <end position="97"/>
    </location>
</feature>
<feature type="zinc finger region" description="C2H2-type 1" evidence="1">
    <location>
        <begin position="164"/>
        <end position="186"/>
    </location>
</feature>
<feature type="zinc finger region" description="C2H2-type 2" evidence="1">
    <location>
        <begin position="192"/>
        <end position="214"/>
    </location>
</feature>
<feature type="zinc finger region" description="C2H2-type 3" evidence="1">
    <location>
        <begin position="220"/>
        <end position="242"/>
    </location>
</feature>
<feature type="zinc finger region" description="C2H2-type 4" evidence="1">
    <location>
        <begin position="248"/>
        <end position="270"/>
    </location>
</feature>
<feature type="zinc finger region" description="C2H2-type 5" evidence="1">
    <location>
        <begin position="276"/>
        <end position="298"/>
    </location>
</feature>
<feature type="zinc finger region" description="C2H2-type 6" evidence="1">
    <location>
        <begin position="304"/>
        <end position="326"/>
    </location>
</feature>
<feature type="zinc finger region" description="C2H2-type 7" evidence="1">
    <location>
        <begin position="332"/>
        <end position="354"/>
    </location>
</feature>
<feature type="zinc finger region" description="C2H2-type 8" evidence="1">
    <location>
        <begin position="360"/>
        <end position="382"/>
    </location>
</feature>
<feature type="zinc finger region" description="C2H2-type 9" evidence="1">
    <location>
        <begin position="388"/>
        <end position="410"/>
    </location>
</feature>
<feature type="zinc finger region" description="C2H2-type 10" evidence="1">
    <location>
        <begin position="416"/>
        <end position="438"/>
    </location>
</feature>
<feature type="zinc finger region" description="C2H2-type 11; atypical" evidence="1">
    <location>
        <begin position="444"/>
        <end position="465"/>
    </location>
</feature>
<feature type="zinc finger region" description="C2H2-type 12" evidence="1">
    <location>
        <begin position="471"/>
        <end position="493"/>
    </location>
</feature>
<feature type="zinc finger region" description="C2H2-type 13" evidence="1">
    <location>
        <begin position="499"/>
        <end position="521"/>
    </location>
</feature>
<feature type="zinc finger region" description="C2H2-type 14" evidence="1">
    <location>
        <begin position="527"/>
        <end position="549"/>
    </location>
</feature>
<feature type="zinc finger region" description="C2H2-type 15" evidence="1">
    <location>
        <begin position="555"/>
        <end position="577"/>
    </location>
</feature>
<feature type="zinc finger region" description="C2H2-type 16" evidence="1">
    <location>
        <begin position="583"/>
        <end position="605"/>
    </location>
</feature>
<feature type="splice variant" id="VSP_055972" description="In isoform 2." evidence="3">
    <location>
        <begin position="1"/>
        <end position="182"/>
    </location>
</feature>
<feature type="sequence variant" id="VAR_052909" description="In dbSNP:rs3745663.">
    <original>R</original>
    <variation>H</variation>
    <location>
        <position position="566"/>
    </location>
</feature>
<accession>P16415</accession>
<accession>A0PJL4</accession>
<accession>B7Z8D4</accession>
<accession>Q6P4A9</accession>